<reference key="1">
    <citation type="submission" date="2004-12" db="EMBL/GenBank/DDBJ databases">
        <title>The genome sequence of Borrelia hermsii and Borrelia turicatae: comparative analysis of two agents of endemic N. America relapsing fever.</title>
        <authorList>
            <person name="Porcella S.F."/>
            <person name="Raffel S.J."/>
            <person name="Schrumpf M.E."/>
            <person name="Montgomery B."/>
            <person name="Smith T."/>
            <person name="Schwan T.G."/>
        </authorList>
    </citation>
    <scope>NUCLEOTIDE SEQUENCE [LARGE SCALE GENOMIC DNA]</scope>
    <source>
        <strain>HS1 / DAH</strain>
    </source>
</reference>
<keyword id="KW-0687">Ribonucleoprotein</keyword>
<keyword id="KW-0689">Ribosomal protein</keyword>
<sequence>MITKDKIRVRLFSFDVKILDQSAESIVRAVQKSKAQIKGPIPLPTKIKKYTVLRSPHVNKKSREQFEMRTHKRLIDILEPTSALMDSLMKLELPAGVEVDIKQ</sequence>
<comment type="function">
    <text evidence="1">Involved in the binding of tRNA to the ribosomes.</text>
</comment>
<comment type="subunit">
    <text evidence="1">Part of the 30S ribosomal subunit.</text>
</comment>
<comment type="similarity">
    <text evidence="1">Belongs to the universal ribosomal protein uS10 family.</text>
</comment>
<evidence type="ECO:0000255" key="1">
    <source>
        <dbReference type="HAMAP-Rule" id="MF_00508"/>
    </source>
</evidence>
<evidence type="ECO:0000305" key="2"/>
<dbReference type="EMBL" id="CP000048">
    <property type="protein sequence ID" value="AAX16986.1"/>
    <property type="molecule type" value="Genomic_DNA"/>
</dbReference>
<dbReference type="RefSeq" id="WP_011772424.1">
    <property type="nucleotide sequence ID" value="NZ_CP073136.1"/>
</dbReference>
<dbReference type="SMR" id="B2S0I0"/>
<dbReference type="GeneID" id="71843295"/>
<dbReference type="KEGG" id="bhr:BH0477"/>
<dbReference type="HOGENOM" id="CLU_122625_1_3_12"/>
<dbReference type="Proteomes" id="UP000008834">
    <property type="component" value="Chromosome"/>
</dbReference>
<dbReference type="GO" id="GO:1990904">
    <property type="term" value="C:ribonucleoprotein complex"/>
    <property type="evidence" value="ECO:0007669"/>
    <property type="project" value="UniProtKB-KW"/>
</dbReference>
<dbReference type="GO" id="GO:0005840">
    <property type="term" value="C:ribosome"/>
    <property type="evidence" value="ECO:0007669"/>
    <property type="project" value="UniProtKB-KW"/>
</dbReference>
<dbReference type="GO" id="GO:0003735">
    <property type="term" value="F:structural constituent of ribosome"/>
    <property type="evidence" value="ECO:0007669"/>
    <property type="project" value="InterPro"/>
</dbReference>
<dbReference type="GO" id="GO:0000049">
    <property type="term" value="F:tRNA binding"/>
    <property type="evidence" value="ECO:0007669"/>
    <property type="project" value="UniProtKB-UniRule"/>
</dbReference>
<dbReference type="GO" id="GO:0006412">
    <property type="term" value="P:translation"/>
    <property type="evidence" value="ECO:0007669"/>
    <property type="project" value="UniProtKB-UniRule"/>
</dbReference>
<dbReference type="FunFam" id="3.30.70.600:FF:000003">
    <property type="entry name" value="30S ribosomal protein S10"/>
    <property type="match status" value="1"/>
</dbReference>
<dbReference type="Gene3D" id="3.30.70.600">
    <property type="entry name" value="Ribosomal protein S10 domain"/>
    <property type="match status" value="1"/>
</dbReference>
<dbReference type="HAMAP" id="MF_00508">
    <property type="entry name" value="Ribosomal_uS10"/>
    <property type="match status" value="1"/>
</dbReference>
<dbReference type="InterPro" id="IPR001848">
    <property type="entry name" value="Ribosomal_uS10"/>
</dbReference>
<dbReference type="InterPro" id="IPR027486">
    <property type="entry name" value="Ribosomal_uS10_dom"/>
</dbReference>
<dbReference type="InterPro" id="IPR036838">
    <property type="entry name" value="Ribosomal_uS10_dom_sf"/>
</dbReference>
<dbReference type="NCBIfam" id="NF001861">
    <property type="entry name" value="PRK00596.1"/>
    <property type="match status" value="1"/>
</dbReference>
<dbReference type="NCBIfam" id="TIGR01049">
    <property type="entry name" value="rpsJ_bact"/>
    <property type="match status" value="1"/>
</dbReference>
<dbReference type="PANTHER" id="PTHR11700">
    <property type="entry name" value="30S RIBOSOMAL PROTEIN S10 FAMILY MEMBER"/>
    <property type="match status" value="1"/>
</dbReference>
<dbReference type="Pfam" id="PF00338">
    <property type="entry name" value="Ribosomal_S10"/>
    <property type="match status" value="1"/>
</dbReference>
<dbReference type="PRINTS" id="PR00971">
    <property type="entry name" value="RIBOSOMALS10"/>
</dbReference>
<dbReference type="SMART" id="SM01403">
    <property type="entry name" value="Ribosomal_S10"/>
    <property type="match status" value="1"/>
</dbReference>
<dbReference type="SUPFAM" id="SSF54999">
    <property type="entry name" value="Ribosomal protein S10"/>
    <property type="match status" value="1"/>
</dbReference>
<gene>
    <name evidence="1" type="primary">rpsJ</name>
    <name type="ordered locus">BH0477</name>
</gene>
<protein>
    <recommendedName>
        <fullName evidence="1">Small ribosomal subunit protein uS10</fullName>
    </recommendedName>
    <alternativeName>
        <fullName evidence="2">30S ribosomal protein S10</fullName>
    </alternativeName>
</protein>
<name>RS10_BORHD</name>
<organism>
    <name type="scientific">Borrelia hermsii (strain HS1 / DAH)</name>
    <dbReference type="NCBI Taxonomy" id="314723"/>
    <lineage>
        <taxon>Bacteria</taxon>
        <taxon>Pseudomonadati</taxon>
        <taxon>Spirochaetota</taxon>
        <taxon>Spirochaetia</taxon>
        <taxon>Spirochaetales</taxon>
        <taxon>Borreliaceae</taxon>
        <taxon>Borrelia</taxon>
    </lineage>
</organism>
<feature type="chain" id="PRO_1000127085" description="Small ribosomal subunit protein uS10">
    <location>
        <begin position="1"/>
        <end position="103"/>
    </location>
</feature>
<proteinExistence type="inferred from homology"/>
<accession>B2S0I0</accession>